<sequence>MPKKSVRHIKIREIISNEQIETQDELVKRLNDYDLNVTQATVSRDIKELQLIKVPIPSGQYVYSLPNDRKFHPLEKLGRYLMDSFVNIDGTDNLLVLKTLPGNAQSIGAILDQINWEEVLGTICGDDTCLIICRSKEASDEIKSRIFNLL</sequence>
<comment type="function">
    <text evidence="1">Regulates arginine biosynthesis genes.</text>
</comment>
<comment type="pathway">
    <text>Amino-acid biosynthesis; L-arginine biosynthesis [regulation].</text>
</comment>
<comment type="subcellular location">
    <subcellularLocation>
        <location evidence="1">Cytoplasm</location>
    </subcellularLocation>
</comment>
<comment type="similarity">
    <text evidence="1">Belongs to the ArgR family.</text>
</comment>
<dbReference type="EMBL" id="BA000018">
    <property type="protein sequence ID" value="BAB42613.1"/>
    <property type="molecule type" value="Genomic_DNA"/>
</dbReference>
<dbReference type="PIR" id="H89931">
    <property type="entry name" value="H89931"/>
</dbReference>
<dbReference type="RefSeq" id="WP_001124985.1">
    <property type="nucleotide sequence ID" value="NC_002745.2"/>
</dbReference>
<dbReference type="SMR" id="P63580"/>
<dbReference type="EnsemblBacteria" id="BAB42613">
    <property type="protein sequence ID" value="BAB42613"/>
    <property type="gene ID" value="BAB42613"/>
</dbReference>
<dbReference type="GeneID" id="98345891"/>
<dbReference type="KEGG" id="sau:SA1351"/>
<dbReference type="HOGENOM" id="CLU_097103_3_0_9"/>
<dbReference type="UniPathway" id="UPA00068"/>
<dbReference type="GO" id="GO:0005737">
    <property type="term" value="C:cytoplasm"/>
    <property type="evidence" value="ECO:0007669"/>
    <property type="project" value="UniProtKB-SubCell"/>
</dbReference>
<dbReference type="GO" id="GO:0034618">
    <property type="term" value="F:arginine binding"/>
    <property type="evidence" value="ECO:0007669"/>
    <property type="project" value="InterPro"/>
</dbReference>
<dbReference type="GO" id="GO:0003677">
    <property type="term" value="F:DNA binding"/>
    <property type="evidence" value="ECO:0007669"/>
    <property type="project" value="UniProtKB-KW"/>
</dbReference>
<dbReference type="GO" id="GO:0003700">
    <property type="term" value="F:DNA-binding transcription factor activity"/>
    <property type="evidence" value="ECO:0007669"/>
    <property type="project" value="UniProtKB-UniRule"/>
</dbReference>
<dbReference type="GO" id="GO:0006526">
    <property type="term" value="P:L-arginine biosynthetic process"/>
    <property type="evidence" value="ECO:0007669"/>
    <property type="project" value="UniProtKB-UniPathway"/>
</dbReference>
<dbReference type="GO" id="GO:0051259">
    <property type="term" value="P:protein complex oligomerization"/>
    <property type="evidence" value="ECO:0007669"/>
    <property type="project" value="InterPro"/>
</dbReference>
<dbReference type="GO" id="GO:1900079">
    <property type="term" value="P:regulation of arginine biosynthetic process"/>
    <property type="evidence" value="ECO:0007669"/>
    <property type="project" value="UniProtKB-UniRule"/>
</dbReference>
<dbReference type="Gene3D" id="3.30.1360.40">
    <property type="match status" value="1"/>
</dbReference>
<dbReference type="Gene3D" id="1.10.10.10">
    <property type="entry name" value="Winged helix-like DNA-binding domain superfamily/Winged helix DNA-binding domain"/>
    <property type="match status" value="1"/>
</dbReference>
<dbReference type="HAMAP" id="MF_00173">
    <property type="entry name" value="Arg_repressor"/>
    <property type="match status" value="1"/>
</dbReference>
<dbReference type="InterPro" id="IPR001669">
    <property type="entry name" value="Arg_repress"/>
</dbReference>
<dbReference type="InterPro" id="IPR020899">
    <property type="entry name" value="Arg_repress_C"/>
</dbReference>
<dbReference type="InterPro" id="IPR036251">
    <property type="entry name" value="Arg_repress_C_sf"/>
</dbReference>
<dbReference type="InterPro" id="IPR020900">
    <property type="entry name" value="Arg_repress_DNA-bd"/>
</dbReference>
<dbReference type="InterPro" id="IPR036388">
    <property type="entry name" value="WH-like_DNA-bd_sf"/>
</dbReference>
<dbReference type="InterPro" id="IPR036390">
    <property type="entry name" value="WH_DNA-bd_sf"/>
</dbReference>
<dbReference type="NCBIfam" id="TIGR01529">
    <property type="entry name" value="argR_whole"/>
    <property type="match status" value="1"/>
</dbReference>
<dbReference type="NCBIfam" id="NF003281">
    <property type="entry name" value="PRK04280.1"/>
    <property type="match status" value="1"/>
</dbReference>
<dbReference type="PANTHER" id="PTHR34471">
    <property type="entry name" value="ARGININE REPRESSOR"/>
    <property type="match status" value="1"/>
</dbReference>
<dbReference type="PANTHER" id="PTHR34471:SF1">
    <property type="entry name" value="ARGININE REPRESSOR"/>
    <property type="match status" value="1"/>
</dbReference>
<dbReference type="Pfam" id="PF01316">
    <property type="entry name" value="Arg_repressor"/>
    <property type="match status" value="1"/>
</dbReference>
<dbReference type="Pfam" id="PF02863">
    <property type="entry name" value="Arg_repressor_C"/>
    <property type="match status" value="1"/>
</dbReference>
<dbReference type="PRINTS" id="PR01467">
    <property type="entry name" value="ARGREPRESSOR"/>
</dbReference>
<dbReference type="SUPFAM" id="SSF55252">
    <property type="entry name" value="C-terminal domain of arginine repressor"/>
    <property type="match status" value="1"/>
</dbReference>
<dbReference type="SUPFAM" id="SSF46785">
    <property type="entry name" value="Winged helix' DNA-binding domain"/>
    <property type="match status" value="1"/>
</dbReference>
<gene>
    <name evidence="1" type="primary">argR</name>
    <name type="synonym">ahrC</name>
    <name type="ordered locus">SA1351</name>
</gene>
<protein>
    <recommendedName>
        <fullName evidence="1">Arginine repressor</fullName>
    </recommendedName>
</protein>
<accession>P63580</accession>
<accession>Q99TX3</accession>
<keyword id="KW-0028">Amino-acid biosynthesis</keyword>
<keyword id="KW-0055">Arginine biosynthesis</keyword>
<keyword id="KW-0963">Cytoplasm</keyword>
<keyword id="KW-0238">DNA-binding</keyword>
<keyword id="KW-0678">Repressor</keyword>
<keyword id="KW-0804">Transcription</keyword>
<keyword id="KW-0805">Transcription regulation</keyword>
<evidence type="ECO:0000255" key="1">
    <source>
        <dbReference type="HAMAP-Rule" id="MF_00173"/>
    </source>
</evidence>
<reference key="1">
    <citation type="journal article" date="2001" name="Lancet">
        <title>Whole genome sequencing of meticillin-resistant Staphylococcus aureus.</title>
        <authorList>
            <person name="Kuroda M."/>
            <person name="Ohta T."/>
            <person name="Uchiyama I."/>
            <person name="Baba T."/>
            <person name="Yuzawa H."/>
            <person name="Kobayashi I."/>
            <person name="Cui L."/>
            <person name="Oguchi A."/>
            <person name="Aoki K."/>
            <person name="Nagai Y."/>
            <person name="Lian J.-Q."/>
            <person name="Ito T."/>
            <person name="Kanamori M."/>
            <person name="Matsumaru H."/>
            <person name="Maruyama A."/>
            <person name="Murakami H."/>
            <person name="Hosoyama A."/>
            <person name="Mizutani-Ui Y."/>
            <person name="Takahashi N.K."/>
            <person name="Sawano T."/>
            <person name="Inoue R."/>
            <person name="Kaito C."/>
            <person name="Sekimizu K."/>
            <person name="Hirakawa H."/>
            <person name="Kuhara S."/>
            <person name="Goto S."/>
            <person name="Yabuzaki J."/>
            <person name="Kanehisa M."/>
            <person name="Yamashita A."/>
            <person name="Oshima K."/>
            <person name="Furuya K."/>
            <person name="Yoshino C."/>
            <person name="Shiba T."/>
            <person name="Hattori M."/>
            <person name="Ogasawara N."/>
            <person name="Hayashi H."/>
            <person name="Hiramatsu K."/>
        </authorList>
    </citation>
    <scope>NUCLEOTIDE SEQUENCE [LARGE SCALE GENOMIC DNA]</scope>
    <source>
        <strain>N315</strain>
    </source>
</reference>
<reference key="2">
    <citation type="submission" date="2007-10" db="UniProtKB">
        <title>Shotgun proteomic analysis of total and membrane protein extracts of S. aureus strain N315.</title>
        <authorList>
            <person name="Vaezzadeh A.R."/>
            <person name="Deshusses J."/>
            <person name="Lescuyer P."/>
            <person name="Hochstrasser D.F."/>
        </authorList>
    </citation>
    <scope>IDENTIFICATION BY MASS SPECTROMETRY [LARGE SCALE ANALYSIS]</scope>
    <source>
        <strain>N315</strain>
    </source>
</reference>
<organism>
    <name type="scientific">Staphylococcus aureus (strain N315)</name>
    <dbReference type="NCBI Taxonomy" id="158879"/>
    <lineage>
        <taxon>Bacteria</taxon>
        <taxon>Bacillati</taxon>
        <taxon>Bacillota</taxon>
        <taxon>Bacilli</taxon>
        <taxon>Bacillales</taxon>
        <taxon>Staphylococcaceae</taxon>
        <taxon>Staphylococcus</taxon>
    </lineage>
</organism>
<proteinExistence type="evidence at protein level"/>
<feature type="chain" id="PRO_0000205116" description="Arginine repressor">
    <location>
        <begin position="1"/>
        <end position="150"/>
    </location>
</feature>
<name>ARGR_STAAN</name>